<keyword id="KW-0002">3D-structure</keyword>
<keyword id="KW-0067">ATP-binding</keyword>
<keyword id="KW-1003">Cell membrane</keyword>
<keyword id="KW-0418">Kinase</keyword>
<keyword id="KW-0472">Membrane</keyword>
<keyword id="KW-0547">Nucleotide-binding</keyword>
<keyword id="KW-0597">Phosphoprotein</keyword>
<keyword id="KW-1185">Reference proteome</keyword>
<keyword id="KW-0808">Transferase</keyword>
<keyword id="KW-0812">Transmembrane</keyword>
<keyword id="KW-1133">Transmembrane helix</keyword>
<keyword id="KW-0902">Two-component regulatory system</keyword>
<evidence type="ECO:0000250" key="1"/>
<evidence type="ECO:0000255" key="2"/>
<evidence type="ECO:0000269" key="3">
    <source>
    </source>
</evidence>
<evidence type="ECO:0000269" key="4">
    <source>
    </source>
</evidence>
<evidence type="ECO:0000269" key="5">
    <source>
    </source>
</evidence>
<evidence type="ECO:0000269" key="6">
    <source>
    </source>
</evidence>
<evidence type="ECO:0000269" key="7">
    <source>
    </source>
</evidence>
<evidence type="ECO:0000305" key="8"/>
<evidence type="ECO:0007829" key="9">
    <source>
        <dbReference type="PDB" id="3EHG"/>
    </source>
</evidence>
<evidence type="ECO:0007829" key="10">
    <source>
        <dbReference type="PDB" id="3EHH"/>
    </source>
</evidence>
<evidence type="ECO:0007829" key="11">
    <source>
        <dbReference type="PDB" id="3EHJ"/>
    </source>
</evidence>
<evidence type="ECO:0007829" key="12">
    <source>
        <dbReference type="PDB" id="3GIE"/>
    </source>
</evidence>
<accession>O34757</accession>
<accession>Q796C8</accession>
<proteinExistence type="evidence at protein level"/>
<protein>
    <recommendedName>
        <fullName>Sensor histidine kinase DesK</fullName>
        <ecNumber>2.7.13.3</ecNumber>
    </recommendedName>
</protein>
<dbReference type="EC" id="2.7.13.3"/>
<dbReference type="EMBL" id="AF027868">
    <property type="protein sequence ID" value="AAB84437.1"/>
    <property type="molecule type" value="Genomic_DNA"/>
</dbReference>
<dbReference type="EMBL" id="AL009126">
    <property type="protein sequence ID" value="CAB13811.1"/>
    <property type="molecule type" value="Genomic_DNA"/>
</dbReference>
<dbReference type="PIR" id="C69901">
    <property type="entry name" value="C69901"/>
</dbReference>
<dbReference type="RefSeq" id="NP_389800.1">
    <property type="nucleotide sequence ID" value="NC_000964.3"/>
</dbReference>
<dbReference type="RefSeq" id="WP_003231271.1">
    <property type="nucleotide sequence ID" value="NZ_OZ025638.1"/>
</dbReference>
<dbReference type="PDB" id="3EHF">
    <property type="method" value="X-ray"/>
    <property type="resolution" value="3.10 A"/>
    <property type="chains" value="A/B/C/D=175-370"/>
</dbReference>
<dbReference type="PDB" id="3EHG">
    <property type="method" value="X-ray"/>
    <property type="resolution" value="1.74 A"/>
    <property type="chains" value="A=243-370"/>
</dbReference>
<dbReference type="PDB" id="3EHH">
    <property type="method" value="X-ray"/>
    <property type="resolution" value="2.10 A"/>
    <property type="chains" value="A/B=154-370"/>
</dbReference>
<dbReference type="PDB" id="3EHJ">
    <property type="method" value="X-ray"/>
    <property type="resolution" value="2.50 A"/>
    <property type="chains" value="A/B=154-370"/>
</dbReference>
<dbReference type="PDB" id="3GIE">
    <property type="method" value="X-ray"/>
    <property type="resolution" value="2.65 A"/>
    <property type="chains" value="A/B=154-370"/>
</dbReference>
<dbReference type="PDB" id="3GIF">
    <property type="method" value="X-ray"/>
    <property type="resolution" value="2.70 A"/>
    <property type="chains" value="A/B=154-370"/>
</dbReference>
<dbReference type="PDB" id="3GIG">
    <property type="method" value="X-ray"/>
    <property type="resolution" value="3.50 A"/>
    <property type="chains" value="A/B=154-370"/>
</dbReference>
<dbReference type="PDB" id="5IUJ">
    <property type="method" value="X-ray"/>
    <property type="resolution" value="3.20 A"/>
    <property type="chains" value="A/B/D/E=154-370"/>
</dbReference>
<dbReference type="PDB" id="5IUK">
    <property type="method" value="X-ray"/>
    <property type="resolution" value="2.90 A"/>
    <property type="chains" value="A/B/D/E=154-370"/>
</dbReference>
<dbReference type="PDB" id="5IUL">
    <property type="method" value="X-ray"/>
    <property type="resolution" value="3.15 A"/>
    <property type="chains" value="A/B/D/E=154-370"/>
</dbReference>
<dbReference type="PDB" id="5IUM">
    <property type="method" value="X-ray"/>
    <property type="resolution" value="3.16 A"/>
    <property type="chains" value="A/B=154-370"/>
</dbReference>
<dbReference type="PDB" id="7SSI">
    <property type="method" value="X-ray"/>
    <property type="resolution" value="3.41 A"/>
    <property type="chains" value="A/B/D/E=154-370"/>
</dbReference>
<dbReference type="PDB" id="7SSJ">
    <property type="method" value="X-ray"/>
    <property type="resolution" value="2.52 A"/>
    <property type="chains" value="A/C/D=150-370"/>
</dbReference>
<dbReference type="PDBsum" id="3EHF"/>
<dbReference type="PDBsum" id="3EHG"/>
<dbReference type="PDBsum" id="3EHH"/>
<dbReference type="PDBsum" id="3EHJ"/>
<dbReference type="PDBsum" id="3GIE"/>
<dbReference type="PDBsum" id="3GIF"/>
<dbReference type="PDBsum" id="3GIG"/>
<dbReference type="PDBsum" id="5IUJ"/>
<dbReference type="PDBsum" id="5IUK"/>
<dbReference type="PDBsum" id="5IUL"/>
<dbReference type="PDBsum" id="5IUM"/>
<dbReference type="PDBsum" id="7SSI"/>
<dbReference type="PDBsum" id="7SSJ"/>
<dbReference type="SMR" id="O34757"/>
<dbReference type="DIP" id="DIP-48966N"/>
<dbReference type="FunCoup" id="O34757">
    <property type="interactions" value="134"/>
</dbReference>
<dbReference type="IntAct" id="O34757">
    <property type="interactions" value="1"/>
</dbReference>
<dbReference type="STRING" id="224308.BSU19190"/>
<dbReference type="TCDB" id="9.B.238.3.5">
    <property type="family name" value="the uncharacterized bacterial 5 tms protein-1 (ubp1) family"/>
</dbReference>
<dbReference type="PaxDb" id="224308-BSU19190"/>
<dbReference type="DNASU" id="939678"/>
<dbReference type="EnsemblBacteria" id="CAB13811">
    <property type="protein sequence ID" value="CAB13811"/>
    <property type="gene ID" value="BSU_19190"/>
</dbReference>
<dbReference type="GeneID" id="939678"/>
<dbReference type="KEGG" id="bsu:BSU19190"/>
<dbReference type="PATRIC" id="fig|224308.179.peg.2097"/>
<dbReference type="eggNOG" id="COG4585">
    <property type="taxonomic scope" value="Bacteria"/>
</dbReference>
<dbReference type="InParanoid" id="O34757"/>
<dbReference type="OrthoDB" id="9797605at2"/>
<dbReference type="PhylomeDB" id="O34757"/>
<dbReference type="BioCyc" id="BSUB:BSU19190-MONOMER"/>
<dbReference type="BRENDA" id="2.7.13.3">
    <property type="organism ID" value="658"/>
</dbReference>
<dbReference type="EvolutionaryTrace" id="O34757"/>
<dbReference type="Proteomes" id="UP000001570">
    <property type="component" value="Chromosome"/>
</dbReference>
<dbReference type="GO" id="GO:0005886">
    <property type="term" value="C:plasma membrane"/>
    <property type="evidence" value="ECO:0000318"/>
    <property type="project" value="GO_Central"/>
</dbReference>
<dbReference type="GO" id="GO:0005524">
    <property type="term" value="F:ATP binding"/>
    <property type="evidence" value="ECO:0007669"/>
    <property type="project" value="UniProtKB-KW"/>
</dbReference>
<dbReference type="GO" id="GO:0042802">
    <property type="term" value="F:identical protein binding"/>
    <property type="evidence" value="ECO:0000353"/>
    <property type="project" value="IntAct"/>
</dbReference>
<dbReference type="GO" id="GO:0004721">
    <property type="term" value="F:phosphoprotein phosphatase activity"/>
    <property type="evidence" value="ECO:0000314"/>
    <property type="project" value="CACAO"/>
</dbReference>
<dbReference type="GO" id="GO:0000155">
    <property type="term" value="F:phosphorelay sensor kinase activity"/>
    <property type="evidence" value="ECO:0007669"/>
    <property type="project" value="InterPro"/>
</dbReference>
<dbReference type="GO" id="GO:0046983">
    <property type="term" value="F:protein dimerization activity"/>
    <property type="evidence" value="ECO:0007669"/>
    <property type="project" value="InterPro"/>
</dbReference>
<dbReference type="GO" id="GO:0004672">
    <property type="term" value="F:protein kinase activity"/>
    <property type="evidence" value="ECO:0000314"/>
    <property type="project" value="CACAO"/>
</dbReference>
<dbReference type="CDD" id="cd16917">
    <property type="entry name" value="HATPase_UhpB-NarQ-NarX-like"/>
    <property type="match status" value="1"/>
</dbReference>
<dbReference type="FunFam" id="3.30.565.10:FF:000235">
    <property type="entry name" value="Sensor histidine kinase DesK"/>
    <property type="match status" value="1"/>
</dbReference>
<dbReference type="Gene3D" id="1.20.5.1930">
    <property type="match status" value="1"/>
</dbReference>
<dbReference type="Gene3D" id="3.30.565.10">
    <property type="entry name" value="Histidine kinase-like ATPase, C-terminal domain"/>
    <property type="match status" value="1"/>
</dbReference>
<dbReference type="InterPro" id="IPR056374">
    <property type="entry name" value="DesK/YvfT_N"/>
</dbReference>
<dbReference type="InterPro" id="IPR036890">
    <property type="entry name" value="HATPase_C_sf"/>
</dbReference>
<dbReference type="InterPro" id="IPR050482">
    <property type="entry name" value="Sensor_HK_TwoCompSys"/>
</dbReference>
<dbReference type="InterPro" id="IPR011712">
    <property type="entry name" value="Sig_transdc_His_kin_sub3_dim/P"/>
</dbReference>
<dbReference type="PANTHER" id="PTHR24421">
    <property type="entry name" value="NITRATE/NITRITE SENSOR PROTEIN NARX-RELATED"/>
    <property type="match status" value="1"/>
</dbReference>
<dbReference type="PANTHER" id="PTHR24421:SF63">
    <property type="entry name" value="SENSOR HISTIDINE KINASE DESK"/>
    <property type="match status" value="1"/>
</dbReference>
<dbReference type="Pfam" id="PF23540">
    <property type="entry name" value="DesK_N"/>
    <property type="match status" value="1"/>
</dbReference>
<dbReference type="Pfam" id="PF02518">
    <property type="entry name" value="HATPase_c"/>
    <property type="match status" value="1"/>
</dbReference>
<dbReference type="Pfam" id="PF07730">
    <property type="entry name" value="HisKA_3"/>
    <property type="match status" value="1"/>
</dbReference>
<dbReference type="SUPFAM" id="SSF55874">
    <property type="entry name" value="ATPase domain of HSP90 chaperone/DNA topoisomerase II/histidine kinase"/>
    <property type="match status" value="1"/>
</dbReference>
<sequence length="370" mass="42673">MIKNHFTFQKLNGITPYIWTIFFILPFYFIWKSSSTFVIIVGIILTLLFFSVYRFAFVSKGWTIYLWGFLLIGISTASITLFSYIYFAFFIAYFIGNIKERVPFHILYYVHLISAAVAANFSLVLKKEFFLTQIPFVVITLISAILLPFSIKSRKERERLEEKLEDANERIAELVKLEERQRIARDLHDTLGQKLSLIGLKSDLARKLIYKDPEQAARELKSVQQTARTSLNEVRKIVSSMKGIRLKDELINIKQILEAADIMFIYEEEKWPENISLLNENILSMCLKEAVTNVVKHSQAKTCRVDIQQLWKEVVITVSDDGTFKGEENSFSKGHGLLGMRERLEFANGSLHIDTENGTKLTMAIPNNSK</sequence>
<name>DESK_BACSU</name>
<feature type="chain" id="PRO_0000360780" description="Sensor histidine kinase DesK">
    <location>
        <begin position="1"/>
        <end position="370"/>
    </location>
</feature>
<feature type="topological domain" description="Extracellular" evidence="2">
    <location>
        <begin position="1"/>
        <end position="10"/>
    </location>
</feature>
<feature type="transmembrane region" description="Helical" evidence="2">
    <location>
        <begin position="11"/>
        <end position="31"/>
    </location>
</feature>
<feature type="topological domain" description="Cytoplasmic" evidence="2">
    <location>
        <begin position="32"/>
        <end position="36"/>
    </location>
</feature>
<feature type="transmembrane region" description="Helical" evidence="2">
    <location>
        <begin position="37"/>
        <end position="57"/>
    </location>
</feature>
<feature type="topological domain" description="Extracellular" evidence="2">
    <location>
        <begin position="58"/>
        <end position="70"/>
    </location>
</feature>
<feature type="transmembrane region" description="Helical" evidence="2">
    <location>
        <begin position="71"/>
        <end position="91"/>
    </location>
</feature>
<feature type="topological domain" description="Cytoplasmic" evidence="2">
    <location>
        <begin position="92"/>
        <end position="103"/>
    </location>
</feature>
<feature type="transmembrane region" description="Helical" evidence="2">
    <location>
        <begin position="104"/>
        <end position="124"/>
    </location>
</feature>
<feature type="topological domain" description="Extracellular" evidence="2">
    <location>
        <begin position="125"/>
        <end position="128"/>
    </location>
</feature>
<feature type="transmembrane region" description="Helical" evidence="2">
    <location>
        <begin position="129"/>
        <end position="149"/>
    </location>
</feature>
<feature type="topological domain" description="Cytoplasmic" evidence="2">
    <location>
        <begin position="150"/>
        <end position="370"/>
    </location>
</feature>
<feature type="domain" description="Histidine kinase">
    <location>
        <begin position="186"/>
        <end position="369"/>
    </location>
</feature>
<feature type="modified residue" description="Phosphohistidine; by autocatalysis" evidence="1">
    <location>
        <position position="188"/>
    </location>
</feature>
<feature type="helix" evidence="11">
    <location>
        <begin position="157"/>
        <end position="162"/>
    </location>
</feature>
<feature type="helix" evidence="10">
    <location>
        <begin position="171"/>
        <end position="208"/>
    </location>
</feature>
<feature type="turn" evidence="10">
    <location>
        <begin position="209"/>
        <end position="211"/>
    </location>
</feature>
<feature type="helix" evidence="10">
    <location>
        <begin position="213"/>
        <end position="235"/>
    </location>
</feature>
<feature type="turn" evidence="10">
    <location>
        <begin position="236"/>
        <end position="241"/>
    </location>
</feature>
<feature type="helix" evidence="9">
    <location>
        <begin position="246"/>
        <end position="259"/>
    </location>
</feature>
<feature type="strand" evidence="9">
    <location>
        <begin position="263"/>
        <end position="265"/>
    </location>
</feature>
<feature type="helix" evidence="9">
    <location>
        <begin position="277"/>
        <end position="297"/>
    </location>
</feature>
<feature type="strand" evidence="9">
    <location>
        <begin position="301"/>
        <end position="310"/>
    </location>
</feature>
<feature type="strand" evidence="9">
    <location>
        <begin position="313"/>
        <end position="322"/>
    </location>
</feature>
<feature type="turn" evidence="12">
    <location>
        <begin position="328"/>
        <end position="330"/>
    </location>
</feature>
<feature type="helix" evidence="9">
    <location>
        <begin position="336"/>
        <end position="346"/>
    </location>
</feature>
<feature type="strand" evidence="9">
    <location>
        <begin position="350"/>
        <end position="354"/>
    </location>
</feature>
<feature type="strand" evidence="9">
    <location>
        <begin position="356"/>
        <end position="366"/>
    </location>
</feature>
<gene>
    <name type="primary">desK</name>
    <name type="synonym">yocF</name>
    <name type="ordered locus">BSU19190</name>
</gene>
<reference key="1">
    <citation type="submission" date="1997-10" db="EMBL/GenBank/DDBJ databases">
        <title>Sequence analysis of the Bacillus subtilis chromosome region between the terC and odhAB loci cloned in a yeast artificial chromosome.</title>
        <authorList>
            <person name="Lapidus A."/>
            <person name="Galleron N."/>
            <person name="Sorokin A."/>
            <person name="Ehrlich S.D."/>
        </authorList>
    </citation>
    <scope>NUCLEOTIDE SEQUENCE [GENOMIC DNA]</scope>
</reference>
<reference key="2">
    <citation type="journal article" date="1997" name="Nature">
        <title>The complete genome sequence of the Gram-positive bacterium Bacillus subtilis.</title>
        <authorList>
            <person name="Kunst F."/>
            <person name="Ogasawara N."/>
            <person name="Moszer I."/>
            <person name="Albertini A.M."/>
            <person name="Alloni G."/>
            <person name="Azevedo V."/>
            <person name="Bertero M.G."/>
            <person name="Bessieres P."/>
            <person name="Bolotin A."/>
            <person name="Borchert S."/>
            <person name="Borriss R."/>
            <person name="Boursier L."/>
            <person name="Brans A."/>
            <person name="Braun M."/>
            <person name="Brignell S.C."/>
            <person name="Bron S."/>
            <person name="Brouillet S."/>
            <person name="Bruschi C.V."/>
            <person name="Caldwell B."/>
            <person name="Capuano V."/>
            <person name="Carter N.M."/>
            <person name="Choi S.-K."/>
            <person name="Codani J.-J."/>
            <person name="Connerton I.F."/>
            <person name="Cummings N.J."/>
            <person name="Daniel R.A."/>
            <person name="Denizot F."/>
            <person name="Devine K.M."/>
            <person name="Duesterhoeft A."/>
            <person name="Ehrlich S.D."/>
            <person name="Emmerson P.T."/>
            <person name="Entian K.-D."/>
            <person name="Errington J."/>
            <person name="Fabret C."/>
            <person name="Ferrari E."/>
            <person name="Foulger D."/>
            <person name="Fritz C."/>
            <person name="Fujita M."/>
            <person name="Fujita Y."/>
            <person name="Fuma S."/>
            <person name="Galizzi A."/>
            <person name="Galleron N."/>
            <person name="Ghim S.-Y."/>
            <person name="Glaser P."/>
            <person name="Goffeau A."/>
            <person name="Golightly E.J."/>
            <person name="Grandi G."/>
            <person name="Guiseppi G."/>
            <person name="Guy B.J."/>
            <person name="Haga K."/>
            <person name="Haiech J."/>
            <person name="Harwood C.R."/>
            <person name="Henaut A."/>
            <person name="Hilbert H."/>
            <person name="Holsappel S."/>
            <person name="Hosono S."/>
            <person name="Hullo M.-F."/>
            <person name="Itaya M."/>
            <person name="Jones L.-M."/>
            <person name="Joris B."/>
            <person name="Karamata D."/>
            <person name="Kasahara Y."/>
            <person name="Klaerr-Blanchard M."/>
            <person name="Klein C."/>
            <person name="Kobayashi Y."/>
            <person name="Koetter P."/>
            <person name="Koningstein G."/>
            <person name="Krogh S."/>
            <person name="Kumano M."/>
            <person name="Kurita K."/>
            <person name="Lapidus A."/>
            <person name="Lardinois S."/>
            <person name="Lauber J."/>
            <person name="Lazarevic V."/>
            <person name="Lee S.-M."/>
            <person name="Levine A."/>
            <person name="Liu H."/>
            <person name="Masuda S."/>
            <person name="Mauel C."/>
            <person name="Medigue C."/>
            <person name="Medina N."/>
            <person name="Mellado R.P."/>
            <person name="Mizuno M."/>
            <person name="Moestl D."/>
            <person name="Nakai S."/>
            <person name="Noback M."/>
            <person name="Noone D."/>
            <person name="O'Reilly M."/>
            <person name="Ogawa K."/>
            <person name="Ogiwara A."/>
            <person name="Oudega B."/>
            <person name="Park S.-H."/>
            <person name="Parro V."/>
            <person name="Pohl T.M."/>
            <person name="Portetelle D."/>
            <person name="Porwollik S."/>
            <person name="Prescott A.M."/>
            <person name="Presecan E."/>
            <person name="Pujic P."/>
            <person name="Purnelle B."/>
            <person name="Rapoport G."/>
            <person name="Rey M."/>
            <person name="Reynolds S."/>
            <person name="Rieger M."/>
            <person name="Rivolta C."/>
            <person name="Rocha E."/>
            <person name="Roche B."/>
            <person name="Rose M."/>
            <person name="Sadaie Y."/>
            <person name="Sato T."/>
            <person name="Scanlan E."/>
            <person name="Schleich S."/>
            <person name="Schroeter R."/>
            <person name="Scoffone F."/>
            <person name="Sekiguchi J."/>
            <person name="Sekowska A."/>
            <person name="Seror S.J."/>
            <person name="Serror P."/>
            <person name="Shin B.-S."/>
            <person name="Soldo B."/>
            <person name="Sorokin A."/>
            <person name="Tacconi E."/>
            <person name="Takagi T."/>
            <person name="Takahashi H."/>
            <person name="Takemaru K."/>
            <person name="Takeuchi M."/>
            <person name="Tamakoshi A."/>
            <person name="Tanaka T."/>
            <person name="Terpstra P."/>
            <person name="Tognoni A."/>
            <person name="Tosato V."/>
            <person name="Uchiyama S."/>
            <person name="Vandenbol M."/>
            <person name="Vannier F."/>
            <person name="Vassarotti A."/>
            <person name="Viari A."/>
            <person name="Wambutt R."/>
            <person name="Wedler E."/>
            <person name="Wedler H."/>
            <person name="Weitzenegger T."/>
            <person name="Winters P."/>
            <person name="Wipat A."/>
            <person name="Yamamoto H."/>
            <person name="Yamane K."/>
            <person name="Yasumoto K."/>
            <person name="Yata K."/>
            <person name="Yoshida K."/>
            <person name="Yoshikawa H.-F."/>
            <person name="Zumstein E."/>
            <person name="Yoshikawa H."/>
            <person name="Danchin A."/>
        </authorList>
    </citation>
    <scope>NUCLEOTIDE SEQUENCE [LARGE SCALE GENOMIC DNA]</scope>
    <source>
        <strain>168</strain>
    </source>
</reference>
<reference key="3">
    <citation type="journal article" date="2001" name="EMBO J.">
        <title>Molecular basis of thermosensing: a two-component signal transduction thermometer in Bacillus subtilis.</title>
        <authorList>
            <person name="Aguilar P.S."/>
            <person name="Hernandez-Arriaga A.M."/>
            <person name="Cybulski L.E."/>
            <person name="Erazo A.C."/>
            <person name="de Mendoza D."/>
        </authorList>
    </citation>
    <scope>FUNCTION</scope>
</reference>
<reference key="4">
    <citation type="journal article" date="2001" name="J. Bacteriol.">
        <title>Comprehensive DNA microarray analysis of Bacillus subtilis two-component regulatory systems.</title>
        <authorList>
            <person name="Kobayashi K."/>
            <person name="Ogura M."/>
            <person name="Yamaguchi H."/>
            <person name="Yoshida K."/>
            <person name="Ogasawara N."/>
            <person name="Tanaka T."/>
            <person name="Fujita Y."/>
        </authorList>
    </citation>
    <scope>FUNCTION</scope>
    <scope>GENE NAME</scope>
</reference>
<reference key="5">
    <citation type="journal article" date="2002" name="Mol. Microbiol.">
        <title>Mechanism of membrane fluidity optimization: isothermal control of the Bacillus subtilis acyl-lipid desaturase.</title>
        <authorList>
            <person name="Cybulski L.E."/>
            <person name="Albanesi D."/>
            <person name="Mansilla M.C."/>
            <person name="Altabe S."/>
            <person name="Aguilar P.S."/>
            <person name="de Mendoza D."/>
        </authorList>
    </citation>
    <scope>FUNCTION</scope>
</reference>
<reference key="6">
    <citation type="journal article" date="2004" name="FEMS Microbiol. Lett.">
        <title>Genetic evidence for the temperature-sensing ability of the membrane domain of the Bacillus subtilis histidine kinase DesK.</title>
        <authorList>
            <person name="Hunger K."/>
            <person name="Beckering C.L."/>
            <person name="Marahiel M.A."/>
        </authorList>
    </citation>
    <scope>FUNCTION</scope>
</reference>
<reference key="7">
    <citation type="journal article" date="2004" name="J. Bacteriol.">
        <title>The membrane fluidity sensor DesK of Bacillus subtilis controls the signal decay of its cognate response regulator.</title>
        <authorList>
            <person name="Albanesi D."/>
            <person name="Mansilla M.C."/>
            <person name="de Mendoza D."/>
        </authorList>
    </citation>
    <scope>FUNCTION</scope>
</reference>
<reference key="8">
    <citation type="journal article" date="2005" name="Arch. Microbiol.">
        <title>The Bacillus subtilis desaturase: a model to understand phospholipid modification and temperature sensing.</title>
        <authorList>
            <person name="Mansilla M.C."/>
            <person name="de Mendoza D."/>
        </authorList>
    </citation>
    <scope>REVIEW</scope>
</reference>
<organism>
    <name type="scientific">Bacillus subtilis (strain 168)</name>
    <dbReference type="NCBI Taxonomy" id="224308"/>
    <lineage>
        <taxon>Bacteria</taxon>
        <taxon>Bacillati</taxon>
        <taxon>Bacillota</taxon>
        <taxon>Bacilli</taxon>
        <taxon>Bacillales</taxon>
        <taxon>Bacillaceae</taxon>
        <taxon>Bacillus</taxon>
    </lineage>
</organism>
<comment type="function">
    <text evidence="3 4 5 6 7">Member of the two-component regulatory system DesR/DesK, responsible for cold induction of the des gene coding for the Delta5 acyl-lipid desaturase. Acts as a sensor of the membrane fluidity. Probably activates DesR by phosphorylation.</text>
</comment>
<comment type="catalytic activity">
    <reaction>
        <text>ATP + protein L-histidine = ADP + protein N-phospho-L-histidine.</text>
        <dbReference type="EC" id="2.7.13.3"/>
    </reaction>
</comment>
<comment type="interaction">
    <interactant intactId="EBI-15806221">
        <id>O34757</id>
    </interactant>
    <interactant intactId="EBI-15806221">
        <id>O34757</id>
        <label>desK</label>
    </interactant>
    <organismsDiffer>false</organismsDiffer>
    <experiments>3</experiments>
</comment>
<comment type="interaction">
    <interactant intactId="EBI-15806221">
        <id>O34757</id>
    </interactant>
    <interactant intactId="EBI-15806271">
        <id>O34723</id>
        <label>desR</label>
    </interactant>
    <organismsDiffer>false</organismsDiffer>
    <experiments>3</experiments>
</comment>
<comment type="subcellular location">
    <subcellularLocation>
        <location evidence="8">Cell membrane</location>
        <topology evidence="8">Multi-pass membrane protein</topology>
    </subcellularLocation>
</comment>